<accession>P48789</accession>
<organism>
    <name type="scientific">Xylanibacter ruminicola</name>
    <name type="common">Prevotella ruminicola</name>
    <dbReference type="NCBI Taxonomy" id="839"/>
    <lineage>
        <taxon>Bacteria</taxon>
        <taxon>Pseudomonadati</taxon>
        <taxon>Bacteroidota</taxon>
        <taxon>Bacteroidia</taxon>
        <taxon>Bacteroidales</taxon>
        <taxon>Prevotellaceae</taxon>
        <taxon>Xylanibacter</taxon>
    </lineage>
</organism>
<dbReference type="EC" id="3.2.1.8"/>
<dbReference type="EMBL" id="Z49241">
    <property type="protein sequence ID" value="CAA89207.1"/>
    <property type="molecule type" value="Genomic_DNA"/>
</dbReference>
<dbReference type="SMR" id="P48789"/>
<dbReference type="CAZy" id="GH10">
    <property type="family name" value="Glycoside Hydrolase Family 10"/>
</dbReference>
<dbReference type="UniPathway" id="UPA00114"/>
<dbReference type="GO" id="GO:0031176">
    <property type="term" value="F:endo-1,4-beta-xylanase activity"/>
    <property type="evidence" value="ECO:0007669"/>
    <property type="project" value="UniProtKB-EC"/>
</dbReference>
<dbReference type="GO" id="GO:0045493">
    <property type="term" value="P:xylan catabolic process"/>
    <property type="evidence" value="ECO:0007669"/>
    <property type="project" value="UniProtKB-UniPathway"/>
</dbReference>
<dbReference type="Gene3D" id="3.20.20.80">
    <property type="entry name" value="Glycosidases"/>
    <property type="match status" value="1"/>
</dbReference>
<dbReference type="InterPro" id="IPR044846">
    <property type="entry name" value="GH10"/>
</dbReference>
<dbReference type="InterPro" id="IPR031158">
    <property type="entry name" value="GH10_AS"/>
</dbReference>
<dbReference type="InterPro" id="IPR001000">
    <property type="entry name" value="GH10_dom"/>
</dbReference>
<dbReference type="InterPro" id="IPR017853">
    <property type="entry name" value="Glycoside_hydrolase_SF"/>
</dbReference>
<dbReference type="PANTHER" id="PTHR31490:SF90">
    <property type="entry name" value="ENDO-1,4-BETA-XYLANASE A"/>
    <property type="match status" value="1"/>
</dbReference>
<dbReference type="PANTHER" id="PTHR31490">
    <property type="entry name" value="GLYCOSYL HYDROLASE"/>
    <property type="match status" value="1"/>
</dbReference>
<dbReference type="Pfam" id="PF00331">
    <property type="entry name" value="Glyco_hydro_10"/>
    <property type="match status" value="1"/>
</dbReference>
<dbReference type="PRINTS" id="PR00134">
    <property type="entry name" value="GLHYDRLASE10"/>
</dbReference>
<dbReference type="SMART" id="SM00633">
    <property type="entry name" value="Glyco_10"/>
    <property type="match status" value="1"/>
</dbReference>
<dbReference type="SUPFAM" id="SSF51445">
    <property type="entry name" value="(Trans)glycosidases"/>
    <property type="match status" value="1"/>
</dbReference>
<dbReference type="PROSITE" id="PS00591">
    <property type="entry name" value="GH10_1"/>
    <property type="match status" value="1"/>
</dbReference>
<dbReference type="PROSITE" id="PS51760">
    <property type="entry name" value="GH10_2"/>
    <property type="match status" value="1"/>
</dbReference>
<protein>
    <recommendedName>
        <fullName>Endo-1,4-beta-xylanase A</fullName>
        <shortName>Xylanase A</shortName>
        <ecNumber>3.2.1.8</ecNumber>
    </recommendedName>
    <alternativeName>
        <fullName>1,4-beta-D-xylan xylanohydrolase A</fullName>
    </alternativeName>
</protein>
<reference key="1">
    <citation type="journal article" date="1995" name="Appl. Environ. Microbiol.">
        <title>A xylan hydrolase gene cluster in Prevotella ruminicola B(1)4: sequence relationships, synergistic interactions, and oxygen sensitivity of a novel enzyme with exoxylanase and beta-(1,4)-xylosidase activities.</title>
        <authorList>
            <person name="Gasparic A."/>
            <person name="Martin J."/>
            <person name="Daniel A.S."/>
            <person name="Flint H.J."/>
        </authorList>
    </citation>
    <scope>NUCLEOTIDE SEQUENCE [GENOMIC DNA]</scope>
    <source>
        <strain>B14</strain>
    </source>
</reference>
<feature type="signal peptide" evidence="2">
    <location>
        <begin position="1"/>
        <end position="20"/>
    </location>
</feature>
<feature type="chain" id="PRO_0000007976" description="Endo-1,4-beta-xylanase A">
    <location>
        <begin position="21"/>
        <end position="369"/>
    </location>
</feature>
<feature type="domain" description="GH10" evidence="3">
    <location>
        <begin position="21"/>
        <end position="367"/>
    </location>
</feature>
<feature type="active site" description="Proton donor" evidence="1">
    <location>
        <position position="156"/>
    </location>
</feature>
<feature type="active site" description="Nucleophile" evidence="4">
    <location>
        <position position="261"/>
    </location>
</feature>
<proteinExistence type="inferred from homology"/>
<keyword id="KW-0119">Carbohydrate metabolism</keyword>
<keyword id="KW-0326">Glycosidase</keyword>
<keyword id="KW-0378">Hydrolase</keyword>
<keyword id="KW-0624">Polysaccharide degradation</keyword>
<keyword id="KW-0732">Signal</keyword>
<keyword id="KW-0858">Xylan degradation</keyword>
<sequence>MRKLTQFCLGLMLLPIAAVAQNQPTMKDVLGKYFLVGTALNSHQIWTHDPKIVHAITDNFNSVVAENCMKGEIIHPEEDYYDWHDADQLVKFAEQHKMTVHGHCLVWHSQAPKWMFTDKEGKEVTREVLIDRMYHHITNVVKRYKGKIKGWDVVNEAILDNGEYRQSPYYKIIGPDFIKLAFIFAHQADPDAELYYNDYSMSIPAKRNAVVKLVKELKAAGCRIDAVGMQSHNGFNYPNLEDYENSIKAFIAAGVDVQFTELDVNMLPNPKSFGGAEISQNYKYNKELNPYVNGLTKAAQKTFDQQYLSFFKIYRKYVDHIKRVTVWGVDDGSSWLNGWPVPGRTNYGLLIDRNYKVKPVVKEIIKLYE</sequence>
<gene>
    <name type="primary">xynA</name>
</gene>
<comment type="catalytic activity">
    <reaction>
        <text>Endohydrolysis of (1-&gt;4)-beta-D-xylosidic linkages in xylans.</text>
        <dbReference type="EC" id="3.2.1.8"/>
    </reaction>
</comment>
<comment type="pathway">
    <text>Glycan degradation; xylan degradation.</text>
</comment>
<comment type="similarity">
    <text evidence="5">Belongs to the glycosyl hydrolase 10 (cellulase F) family.</text>
</comment>
<name>XYNA_XYLRU</name>
<evidence type="ECO:0000250" key="1"/>
<evidence type="ECO:0000255" key="2"/>
<evidence type="ECO:0000255" key="3">
    <source>
        <dbReference type="PROSITE-ProRule" id="PRU01096"/>
    </source>
</evidence>
<evidence type="ECO:0000255" key="4">
    <source>
        <dbReference type="PROSITE-ProRule" id="PRU10061"/>
    </source>
</evidence>
<evidence type="ECO:0000305" key="5"/>